<accession>A6MM87</accession>
<geneLocation type="chloroplast"/>
<protein>
    <recommendedName>
        <fullName evidence="2">NAD(P)H-quinone oxidoreductase chain 4, chloroplastic</fullName>
        <ecNumber evidence="2">7.1.1.-</ecNumber>
    </recommendedName>
    <alternativeName>
        <fullName evidence="2">NAD(P)H dehydrogenase, chain 4</fullName>
    </alternativeName>
    <alternativeName>
        <fullName evidence="2">NADH-plastoquinone oxidoreductase chain 4</fullName>
    </alternativeName>
</protein>
<gene>
    <name evidence="2" type="primary">ndhD</name>
</gene>
<name>NU4C_BUXMI</name>
<comment type="catalytic activity">
    <reaction evidence="2">
        <text>a plastoquinone + NADH + (n+1) H(+)(in) = a plastoquinol + NAD(+) + n H(+)(out)</text>
        <dbReference type="Rhea" id="RHEA:42608"/>
        <dbReference type="Rhea" id="RHEA-COMP:9561"/>
        <dbReference type="Rhea" id="RHEA-COMP:9562"/>
        <dbReference type="ChEBI" id="CHEBI:15378"/>
        <dbReference type="ChEBI" id="CHEBI:17757"/>
        <dbReference type="ChEBI" id="CHEBI:57540"/>
        <dbReference type="ChEBI" id="CHEBI:57945"/>
        <dbReference type="ChEBI" id="CHEBI:62192"/>
    </reaction>
</comment>
<comment type="catalytic activity">
    <reaction evidence="2">
        <text>a plastoquinone + NADPH + (n+1) H(+)(in) = a plastoquinol + NADP(+) + n H(+)(out)</text>
        <dbReference type="Rhea" id="RHEA:42612"/>
        <dbReference type="Rhea" id="RHEA-COMP:9561"/>
        <dbReference type="Rhea" id="RHEA-COMP:9562"/>
        <dbReference type="ChEBI" id="CHEBI:15378"/>
        <dbReference type="ChEBI" id="CHEBI:17757"/>
        <dbReference type="ChEBI" id="CHEBI:57783"/>
        <dbReference type="ChEBI" id="CHEBI:58349"/>
        <dbReference type="ChEBI" id="CHEBI:62192"/>
    </reaction>
</comment>
<comment type="subcellular location">
    <subcellularLocation>
        <location evidence="2">Plastid</location>
        <location evidence="2">Chloroplast thylakoid membrane</location>
        <topology evidence="2">Multi-pass membrane protein</topology>
    </subcellularLocation>
</comment>
<comment type="RNA editing">
    <location>
        <position position="1" evidence="1"/>
    </location>
    <text evidence="1">The initiator methionine is created by RNA editing.</text>
</comment>
<comment type="similarity">
    <text evidence="2">Belongs to the complex I subunit 4 family.</text>
</comment>
<evidence type="ECO:0000250" key="1"/>
<evidence type="ECO:0000255" key="2">
    <source>
        <dbReference type="HAMAP-Rule" id="MF_00491"/>
    </source>
</evidence>
<keyword id="KW-0150">Chloroplast</keyword>
<keyword id="KW-0472">Membrane</keyword>
<keyword id="KW-0520">NAD</keyword>
<keyword id="KW-0521">NADP</keyword>
<keyword id="KW-0934">Plastid</keyword>
<keyword id="KW-0618">Plastoquinone</keyword>
<keyword id="KW-0874">Quinone</keyword>
<keyword id="KW-0691">RNA editing</keyword>
<keyword id="KW-0793">Thylakoid</keyword>
<keyword id="KW-1278">Translocase</keyword>
<keyword id="KW-0812">Transmembrane</keyword>
<keyword id="KW-1133">Transmembrane helix</keyword>
<feature type="chain" id="PRO_0000343273" description="NAD(P)H-quinone oxidoreductase chain 4, chloroplastic">
    <location>
        <begin position="1"/>
        <end position="501"/>
    </location>
</feature>
<feature type="transmembrane region" description="Helical" evidence="2">
    <location>
        <begin position="4"/>
        <end position="24"/>
    </location>
</feature>
<feature type="transmembrane region" description="Helical" evidence="2">
    <location>
        <begin position="35"/>
        <end position="55"/>
    </location>
</feature>
<feature type="transmembrane region" description="Helical" evidence="2">
    <location>
        <begin position="84"/>
        <end position="104"/>
    </location>
</feature>
<feature type="transmembrane region" description="Helical" evidence="2">
    <location>
        <begin position="111"/>
        <end position="129"/>
    </location>
</feature>
<feature type="transmembrane region" description="Helical" evidence="2">
    <location>
        <begin position="134"/>
        <end position="154"/>
    </location>
</feature>
<feature type="transmembrane region" description="Helical" evidence="2">
    <location>
        <begin position="168"/>
        <end position="188"/>
    </location>
</feature>
<feature type="transmembrane region" description="Helical" evidence="2">
    <location>
        <begin position="209"/>
        <end position="229"/>
    </location>
</feature>
<feature type="transmembrane region" description="Helical" evidence="2">
    <location>
        <begin position="243"/>
        <end position="263"/>
    </location>
</feature>
<feature type="transmembrane region" description="Helical" evidence="2">
    <location>
        <begin position="273"/>
        <end position="293"/>
    </location>
</feature>
<feature type="transmembrane region" description="Helical" evidence="2">
    <location>
        <begin position="306"/>
        <end position="326"/>
    </location>
</feature>
<feature type="transmembrane region" description="Helical" evidence="2">
    <location>
        <begin position="331"/>
        <end position="351"/>
    </location>
</feature>
<feature type="transmembrane region" description="Helical" evidence="2">
    <location>
        <begin position="387"/>
        <end position="407"/>
    </location>
</feature>
<feature type="transmembrane region" description="Helical" evidence="2">
    <location>
        <begin position="417"/>
        <end position="437"/>
    </location>
</feature>
<feature type="transmembrane region" description="Helical" evidence="2">
    <location>
        <begin position="463"/>
        <end position="483"/>
    </location>
</feature>
<sequence>MNYFPWLTIIVVLPISAGSLILFLPYKGNKTIRWYTICICILELLITTYAFCYHFQLDDPLIQLEEDYKWVNFFDFHWRLGIDGLSIGPILLTGFITTLATLAARPVTRDSRLLHLLMLAMYSGQIGSFSSRDLLLFFIMWELELIPVYLLLSMWGGGKKRLYSATKFILYTAGGSIFLLMGVLGMDLYGSNEPTLNFETLANQSYPVALEILFYFGFIIAFAVKSPIIPLHTWLPDTHGEAHYSTCMLLAGILLKMGAYGLIRINMELLPHAHSIFSPWLVIVGTMQIIYAASTSPGQRNLKKRIAYSSVSHMGFIIIGIGSITDAGLNGAILQIISHGFIGAALFFLAGTSYDRIRLIYLDEMGGIAIQMPKIFTMFSSFSMASLALPGMSGFVAELIVFFGIITSQKYFLMPKILITFVMAIGMILTPIYSLSMSRQMFYGYKLFNTTNSFFSDSGPRELFVSISIFLPVIGIGIYPDFVLSLSVDKVEAILSNYFYR</sequence>
<reference key="1">
    <citation type="journal article" date="2007" name="Mol. Phylogenet. Evol.">
        <title>Phylogenetic and evolutionary implications of complete chloroplast genome sequences of four early-diverging angiosperms: Buxus (Buxaceae), Chloranthus (Chloranthaceae), Dioscorea (Dioscoreaceae), and Illicium (Schisandraceae).</title>
        <authorList>
            <person name="Hansen D.R."/>
            <person name="Dastidar S.G."/>
            <person name="Cai Z."/>
            <person name="Penaflor C."/>
            <person name="Kuehl J.V."/>
            <person name="Boore J.L."/>
            <person name="Jansen R.K."/>
        </authorList>
    </citation>
    <scope>NUCLEOTIDE SEQUENCE [LARGE SCALE GENOMIC DNA]</scope>
</reference>
<organism>
    <name type="scientific">Buxus microphylla</name>
    <name type="common">Littleleaf boxwood</name>
    <name type="synonym">Japanese boxwood</name>
    <dbReference type="NCBI Taxonomy" id="153571"/>
    <lineage>
        <taxon>Eukaryota</taxon>
        <taxon>Viridiplantae</taxon>
        <taxon>Streptophyta</taxon>
        <taxon>Embryophyta</taxon>
        <taxon>Tracheophyta</taxon>
        <taxon>Spermatophyta</taxon>
        <taxon>Magnoliopsida</taxon>
        <taxon>Buxales</taxon>
        <taxon>Buxaceae</taxon>
        <taxon>Buxus</taxon>
    </lineage>
</organism>
<dbReference type="EC" id="7.1.1.-" evidence="2"/>
<dbReference type="EMBL" id="EF380351">
    <property type="protein sequence ID" value="ABQ45300.1"/>
    <property type="status" value="ALT_SEQ"/>
    <property type="molecule type" value="Genomic_DNA"/>
</dbReference>
<dbReference type="RefSeq" id="YP_001294235.2">
    <property type="nucleotide sequence ID" value="NC_009599.1"/>
</dbReference>
<dbReference type="SMR" id="A6MM87"/>
<dbReference type="GeneID" id="5236934"/>
<dbReference type="GO" id="GO:0009535">
    <property type="term" value="C:chloroplast thylakoid membrane"/>
    <property type="evidence" value="ECO:0007669"/>
    <property type="project" value="UniProtKB-SubCell"/>
</dbReference>
<dbReference type="GO" id="GO:0008137">
    <property type="term" value="F:NADH dehydrogenase (ubiquinone) activity"/>
    <property type="evidence" value="ECO:0007669"/>
    <property type="project" value="InterPro"/>
</dbReference>
<dbReference type="GO" id="GO:0048039">
    <property type="term" value="F:ubiquinone binding"/>
    <property type="evidence" value="ECO:0007669"/>
    <property type="project" value="TreeGrafter"/>
</dbReference>
<dbReference type="GO" id="GO:0042773">
    <property type="term" value="P:ATP synthesis coupled electron transport"/>
    <property type="evidence" value="ECO:0007669"/>
    <property type="project" value="InterPro"/>
</dbReference>
<dbReference type="GO" id="GO:0015990">
    <property type="term" value="P:electron transport coupled proton transport"/>
    <property type="evidence" value="ECO:0007669"/>
    <property type="project" value="TreeGrafter"/>
</dbReference>
<dbReference type="HAMAP" id="MF_00491">
    <property type="entry name" value="NDH1_NuoM"/>
    <property type="match status" value="1"/>
</dbReference>
<dbReference type="InterPro" id="IPR022997">
    <property type="entry name" value="NADH_Q_OxRdtase_chain4"/>
</dbReference>
<dbReference type="InterPro" id="IPR010227">
    <property type="entry name" value="NADH_Q_OxRdtase_chainM/4"/>
</dbReference>
<dbReference type="InterPro" id="IPR003918">
    <property type="entry name" value="NADH_UbQ_OxRdtase"/>
</dbReference>
<dbReference type="InterPro" id="IPR001750">
    <property type="entry name" value="ND/Mrp_TM"/>
</dbReference>
<dbReference type="NCBIfam" id="TIGR01972">
    <property type="entry name" value="NDH_I_M"/>
    <property type="match status" value="1"/>
</dbReference>
<dbReference type="PANTHER" id="PTHR43507:SF21">
    <property type="entry name" value="NAD(P)H-QUINONE OXIDOREDUCTASE CHAIN 4, CHLOROPLASTIC"/>
    <property type="match status" value="1"/>
</dbReference>
<dbReference type="PANTHER" id="PTHR43507">
    <property type="entry name" value="NADH-UBIQUINONE OXIDOREDUCTASE CHAIN 4"/>
    <property type="match status" value="1"/>
</dbReference>
<dbReference type="Pfam" id="PF00361">
    <property type="entry name" value="Proton_antipo_M"/>
    <property type="match status" value="1"/>
</dbReference>
<dbReference type="PRINTS" id="PR01437">
    <property type="entry name" value="NUOXDRDTASE4"/>
</dbReference>
<proteinExistence type="inferred from homology"/>